<feature type="chain" id="PRO_1000023030" description="UDP-N-acetylglucosamine 1-carboxyvinyltransferase">
    <location>
        <begin position="1"/>
        <end position="427"/>
    </location>
</feature>
<feature type="active site" description="Proton donor" evidence="1">
    <location>
        <position position="119"/>
    </location>
</feature>
<feature type="binding site" evidence="1">
    <location>
        <begin position="24"/>
        <end position="25"/>
    </location>
    <ligand>
        <name>phosphoenolpyruvate</name>
        <dbReference type="ChEBI" id="CHEBI:58702"/>
    </ligand>
</feature>
<feature type="binding site" evidence="1">
    <location>
        <position position="95"/>
    </location>
    <ligand>
        <name>UDP-N-acetyl-alpha-D-glucosamine</name>
        <dbReference type="ChEBI" id="CHEBI:57705"/>
    </ligand>
</feature>
<feature type="binding site" evidence="1">
    <location>
        <begin position="124"/>
        <end position="128"/>
    </location>
    <ligand>
        <name>UDP-N-acetyl-alpha-D-glucosamine</name>
        <dbReference type="ChEBI" id="CHEBI:57705"/>
    </ligand>
</feature>
<feature type="binding site" evidence="1">
    <location>
        <position position="308"/>
    </location>
    <ligand>
        <name>UDP-N-acetyl-alpha-D-glucosamine</name>
        <dbReference type="ChEBI" id="CHEBI:57705"/>
    </ligand>
</feature>
<feature type="binding site" evidence="1">
    <location>
        <position position="330"/>
    </location>
    <ligand>
        <name>UDP-N-acetyl-alpha-D-glucosamine</name>
        <dbReference type="ChEBI" id="CHEBI:57705"/>
    </ligand>
</feature>
<feature type="modified residue" description="2-(S-cysteinyl)pyruvic acid O-phosphothioketal" evidence="1">
    <location>
        <position position="119"/>
    </location>
</feature>
<proteinExistence type="inferred from homology"/>
<keyword id="KW-0131">Cell cycle</keyword>
<keyword id="KW-0132">Cell division</keyword>
<keyword id="KW-0133">Cell shape</keyword>
<keyword id="KW-0961">Cell wall biogenesis/degradation</keyword>
<keyword id="KW-0963">Cytoplasm</keyword>
<keyword id="KW-0573">Peptidoglycan synthesis</keyword>
<keyword id="KW-0670">Pyruvate</keyword>
<keyword id="KW-0808">Transferase</keyword>
<comment type="function">
    <text evidence="1">Cell wall formation. Adds enolpyruvyl to UDP-N-acetylglucosamine.</text>
</comment>
<comment type="catalytic activity">
    <reaction evidence="1">
        <text>phosphoenolpyruvate + UDP-N-acetyl-alpha-D-glucosamine = UDP-N-acetyl-3-O-(1-carboxyvinyl)-alpha-D-glucosamine + phosphate</text>
        <dbReference type="Rhea" id="RHEA:18681"/>
        <dbReference type="ChEBI" id="CHEBI:43474"/>
        <dbReference type="ChEBI" id="CHEBI:57705"/>
        <dbReference type="ChEBI" id="CHEBI:58702"/>
        <dbReference type="ChEBI" id="CHEBI:68483"/>
        <dbReference type="EC" id="2.5.1.7"/>
    </reaction>
</comment>
<comment type="pathway">
    <text evidence="1">Cell wall biogenesis; peptidoglycan biosynthesis.</text>
</comment>
<comment type="subcellular location">
    <subcellularLocation>
        <location evidence="1">Cytoplasm</location>
    </subcellularLocation>
</comment>
<comment type="similarity">
    <text evidence="1">Belongs to the EPSP synthase family. MurA subfamily.</text>
</comment>
<reference key="1">
    <citation type="submission" date="2006-04" db="EMBL/GenBank/DDBJ databases">
        <title>Complete sequence of chromosome of Deinococcus geothermalis DSM 11300.</title>
        <authorList>
            <person name="Copeland A."/>
            <person name="Lucas S."/>
            <person name="Lapidus A."/>
            <person name="Barry K."/>
            <person name="Detter J.C."/>
            <person name="Glavina del Rio T."/>
            <person name="Hammon N."/>
            <person name="Israni S."/>
            <person name="Dalin E."/>
            <person name="Tice H."/>
            <person name="Pitluck S."/>
            <person name="Brettin T."/>
            <person name="Bruce D."/>
            <person name="Han C."/>
            <person name="Tapia R."/>
            <person name="Saunders E."/>
            <person name="Gilna P."/>
            <person name="Schmutz J."/>
            <person name="Larimer F."/>
            <person name="Land M."/>
            <person name="Hauser L."/>
            <person name="Kyrpides N."/>
            <person name="Kim E."/>
            <person name="Daly M.J."/>
            <person name="Fredrickson J.K."/>
            <person name="Makarova K.S."/>
            <person name="Gaidamakova E.K."/>
            <person name="Zhai M."/>
            <person name="Richardson P."/>
        </authorList>
    </citation>
    <scope>NUCLEOTIDE SEQUENCE [LARGE SCALE GENOMIC DNA]</scope>
    <source>
        <strain>DSM 11300 / CIP 105573 / AG-3a</strain>
    </source>
</reference>
<name>MURA_DEIGD</name>
<accession>Q1IYK3</accession>
<organism>
    <name type="scientific">Deinococcus geothermalis (strain DSM 11300 / CIP 105573 / AG-3a)</name>
    <dbReference type="NCBI Taxonomy" id="319795"/>
    <lineage>
        <taxon>Bacteria</taxon>
        <taxon>Thermotogati</taxon>
        <taxon>Deinococcota</taxon>
        <taxon>Deinococci</taxon>
        <taxon>Deinococcales</taxon>
        <taxon>Deinococcaceae</taxon>
        <taxon>Deinococcus</taxon>
    </lineage>
</organism>
<sequence length="427" mass="45535">MQLTPLHIQGGRNLSGEIAIQPSKNAALPIIVASLLSSEPVTLHGVPRLSDVYTILELAHHIGTRHVWTGPNSLTLHTPEILNTDAPYALVSKMRASFIMMGALLARAGEATVSMPGGCAFGYRPVDQHVKAFRALGVHIVEEGGNFEARREGSLNGAFVFELLTVGGTQNAILASVLGDGVVTLENASIDTDVVDLINFLNSLGAQIQGGGTNTLTIRGVRALRGGEYRIIPDRIEAGTFMIAAAATRSRLTLTNVRPDHLRAVSSKLMEMGVDILETEGRLIVDARDRELKPVNVTTQSFPGFPTDVQPQMSALLATVPGTSVVQDPVYPDRLTHVAELHRMGANITVSGYTQVIQGGTLHAAPVKAADLRAGAALFIAALTTEGETVIEGVQYLNRGYERLAERLRSIGANAWQPQPVLASAMD</sequence>
<evidence type="ECO:0000255" key="1">
    <source>
        <dbReference type="HAMAP-Rule" id="MF_00111"/>
    </source>
</evidence>
<gene>
    <name evidence="1" type="primary">murA</name>
    <name type="ordered locus">Dgeo_1386</name>
</gene>
<dbReference type="EC" id="2.5.1.7" evidence="1"/>
<dbReference type="EMBL" id="CP000359">
    <property type="protein sequence ID" value="ABF45681.1"/>
    <property type="molecule type" value="Genomic_DNA"/>
</dbReference>
<dbReference type="RefSeq" id="WP_011530517.1">
    <property type="nucleotide sequence ID" value="NC_008025.1"/>
</dbReference>
<dbReference type="SMR" id="Q1IYK3"/>
<dbReference type="STRING" id="319795.Dgeo_1386"/>
<dbReference type="KEGG" id="dge:Dgeo_1386"/>
<dbReference type="eggNOG" id="COG0766">
    <property type="taxonomic scope" value="Bacteria"/>
</dbReference>
<dbReference type="HOGENOM" id="CLU_027387_0_0_0"/>
<dbReference type="UniPathway" id="UPA00219"/>
<dbReference type="Proteomes" id="UP000002431">
    <property type="component" value="Chromosome"/>
</dbReference>
<dbReference type="GO" id="GO:0005737">
    <property type="term" value="C:cytoplasm"/>
    <property type="evidence" value="ECO:0007669"/>
    <property type="project" value="UniProtKB-SubCell"/>
</dbReference>
<dbReference type="GO" id="GO:0008760">
    <property type="term" value="F:UDP-N-acetylglucosamine 1-carboxyvinyltransferase activity"/>
    <property type="evidence" value="ECO:0007669"/>
    <property type="project" value="UniProtKB-UniRule"/>
</dbReference>
<dbReference type="GO" id="GO:0051301">
    <property type="term" value="P:cell division"/>
    <property type="evidence" value="ECO:0007669"/>
    <property type="project" value="UniProtKB-KW"/>
</dbReference>
<dbReference type="GO" id="GO:0071555">
    <property type="term" value="P:cell wall organization"/>
    <property type="evidence" value="ECO:0007669"/>
    <property type="project" value="UniProtKB-KW"/>
</dbReference>
<dbReference type="GO" id="GO:0009252">
    <property type="term" value="P:peptidoglycan biosynthetic process"/>
    <property type="evidence" value="ECO:0007669"/>
    <property type="project" value="UniProtKB-UniRule"/>
</dbReference>
<dbReference type="GO" id="GO:0008360">
    <property type="term" value="P:regulation of cell shape"/>
    <property type="evidence" value="ECO:0007669"/>
    <property type="project" value="UniProtKB-KW"/>
</dbReference>
<dbReference type="GO" id="GO:0019277">
    <property type="term" value="P:UDP-N-acetylgalactosamine biosynthetic process"/>
    <property type="evidence" value="ECO:0007669"/>
    <property type="project" value="InterPro"/>
</dbReference>
<dbReference type="CDD" id="cd01555">
    <property type="entry name" value="UdpNAET"/>
    <property type="match status" value="1"/>
</dbReference>
<dbReference type="Gene3D" id="3.65.10.10">
    <property type="entry name" value="Enolpyruvate transferase domain"/>
    <property type="match status" value="2"/>
</dbReference>
<dbReference type="HAMAP" id="MF_00111">
    <property type="entry name" value="MurA"/>
    <property type="match status" value="1"/>
</dbReference>
<dbReference type="InterPro" id="IPR001986">
    <property type="entry name" value="Enolpyruvate_Tfrase_dom"/>
</dbReference>
<dbReference type="InterPro" id="IPR036968">
    <property type="entry name" value="Enolpyruvate_Tfrase_sf"/>
</dbReference>
<dbReference type="InterPro" id="IPR050068">
    <property type="entry name" value="MurA_subfamily"/>
</dbReference>
<dbReference type="InterPro" id="IPR013792">
    <property type="entry name" value="RNA3'P_cycl/enolpyr_Trfase_a/b"/>
</dbReference>
<dbReference type="InterPro" id="IPR005750">
    <property type="entry name" value="UDP_GlcNAc_COvinyl_MurA"/>
</dbReference>
<dbReference type="NCBIfam" id="TIGR01072">
    <property type="entry name" value="murA"/>
    <property type="match status" value="1"/>
</dbReference>
<dbReference type="NCBIfam" id="NF006873">
    <property type="entry name" value="PRK09369.1"/>
    <property type="match status" value="1"/>
</dbReference>
<dbReference type="PANTHER" id="PTHR43783">
    <property type="entry name" value="UDP-N-ACETYLGLUCOSAMINE 1-CARBOXYVINYLTRANSFERASE"/>
    <property type="match status" value="1"/>
</dbReference>
<dbReference type="PANTHER" id="PTHR43783:SF1">
    <property type="entry name" value="UDP-N-ACETYLGLUCOSAMINE 1-CARBOXYVINYLTRANSFERASE"/>
    <property type="match status" value="1"/>
</dbReference>
<dbReference type="Pfam" id="PF00275">
    <property type="entry name" value="EPSP_synthase"/>
    <property type="match status" value="1"/>
</dbReference>
<dbReference type="SUPFAM" id="SSF55205">
    <property type="entry name" value="EPT/RTPC-like"/>
    <property type="match status" value="1"/>
</dbReference>
<protein>
    <recommendedName>
        <fullName evidence="1">UDP-N-acetylglucosamine 1-carboxyvinyltransferase</fullName>
        <ecNumber evidence="1">2.5.1.7</ecNumber>
    </recommendedName>
    <alternativeName>
        <fullName evidence="1">Enoylpyruvate transferase</fullName>
    </alternativeName>
    <alternativeName>
        <fullName evidence="1">UDP-N-acetylglucosamine enolpyruvyl transferase</fullName>
        <shortName evidence="1">EPT</shortName>
    </alternativeName>
</protein>